<protein>
    <recommendedName>
        <fullName evidence="3">Cyclotide psyleio A</fullName>
    </recommendedName>
</protein>
<evidence type="ECO:0000255" key="1">
    <source>
        <dbReference type="PROSITE-ProRule" id="PRU00395"/>
    </source>
</evidence>
<evidence type="ECO:0000269" key="2">
    <source>
    </source>
</evidence>
<evidence type="ECO:0000303" key="3">
    <source>
    </source>
</evidence>
<evidence type="ECO:0000305" key="4"/>
<evidence type="ECO:0000305" key="5">
    <source>
    </source>
</evidence>
<organism>
    <name type="scientific">Psychotria leiocarpa</name>
    <dbReference type="NCBI Taxonomy" id="2022332"/>
    <lineage>
        <taxon>Eukaryota</taxon>
        <taxon>Viridiplantae</taxon>
        <taxon>Streptophyta</taxon>
        <taxon>Embryophyta</taxon>
        <taxon>Tracheophyta</taxon>
        <taxon>Spermatophyta</taxon>
        <taxon>Magnoliopsida</taxon>
        <taxon>eudicotyledons</taxon>
        <taxon>Gunneridae</taxon>
        <taxon>Pentapetalae</taxon>
        <taxon>asterids</taxon>
        <taxon>lamiids</taxon>
        <taxon>Gentianales</taxon>
        <taxon>Rubiaceae</taxon>
        <taxon>Rubioideae</taxon>
        <taxon>Psychotrieae</taxon>
        <taxon>Psychotria</taxon>
    </lineage>
</organism>
<reference evidence="4" key="1">
    <citation type="journal article" date="2016" name="J. Nat. Prod.">
        <title>Isolation and Characterization of Cyclotides from Brazilian Psychotria: Significance in Plant Defense and Co-occurrence with Antioxidant Alkaloids.</title>
        <authorList>
            <person name="Matsuura H.N."/>
            <person name="Poth A.G."/>
            <person name="Yendo A.C."/>
            <person name="Fett-Neto A.G."/>
            <person name="Craik D.J."/>
        </authorList>
    </citation>
    <scope>PROTEIN SEQUENCE</scope>
    <scope>FUNCTION</scope>
    <scope>MASS SPECTROMETRY</scope>
    <scope>IDENTIFICATION BY MASS SPECTROMETRY</scope>
    <scope>CYCLIZATION</scope>
    <source>
        <tissue evidence="3">Leaf</tissue>
    </source>
</reference>
<sequence length="29" mass="3014">GLPICGETCFTGTCNTPGCSCTYPICTRD</sequence>
<comment type="function">
    <text evidence="1 2">Probably participates in a plant defense mechanism (Probable). Has insecticidal activity against H.armigera larvae (PubMed:28006906).</text>
</comment>
<comment type="domain">
    <text evidence="4">The presence of a 'disulfide through disulfide knot' structurally defines this protein as a knottin.</text>
</comment>
<comment type="PTM">
    <text evidence="1 2">This is a cyclic peptide.</text>
</comment>
<comment type="mass spectrometry" mass="3354.22" method="MALDI" evidence="2"/>
<comment type="similarity">
    <text evidence="1">Belongs to the cyclotide family. Moebius subfamily.</text>
</comment>
<comment type="caution">
    <text evidence="1">This peptide is cyclic. The start position was chosen by similarity to Oak1 (kalata B1) for which the DNA sequence is known.</text>
</comment>
<dbReference type="SMR" id="C0HL27"/>
<dbReference type="GO" id="GO:0006952">
    <property type="term" value="P:defense response"/>
    <property type="evidence" value="ECO:0007669"/>
    <property type="project" value="UniProtKB-KW"/>
</dbReference>
<dbReference type="InterPro" id="IPR005535">
    <property type="entry name" value="Cyclotide"/>
</dbReference>
<dbReference type="InterPro" id="IPR012324">
    <property type="entry name" value="Cyclotide_moebius_CS"/>
</dbReference>
<dbReference type="InterPro" id="IPR036146">
    <property type="entry name" value="Cyclotide_sf"/>
</dbReference>
<dbReference type="Pfam" id="PF03784">
    <property type="entry name" value="Cyclotide"/>
    <property type="match status" value="1"/>
</dbReference>
<dbReference type="PIRSF" id="PIRSF037891">
    <property type="entry name" value="Cycloviolacin"/>
    <property type="match status" value="1"/>
</dbReference>
<dbReference type="SUPFAM" id="SSF57038">
    <property type="entry name" value="Cyclotides"/>
    <property type="match status" value="1"/>
</dbReference>
<dbReference type="PROSITE" id="PS51052">
    <property type="entry name" value="CYCLOTIDE"/>
    <property type="match status" value="1"/>
</dbReference>
<dbReference type="PROSITE" id="PS60009">
    <property type="entry name" value="CYCLOTIDE_MOEBIUS"/>
    <property type="match status" value="1"/>
</dbReference>
<name>CYPLA_PSYLE</name>
<proteinExistence type="evidence at protein level"/>
<accession>C0HL27</accession>
<keyword id="KW-0903">Direct protein sequencing</keyword>
<keyword id="KW-1015">Disulfide bond</keyword>
<keyword id="KW-0960">Knottin</keyword>
<keyword id="KW-0611">Plant defense</keyword>
<feature type="peptide" id="PRO_0000441792" description="Cyclotide psyleio A" evidence="2">
    <location>
        <begin position="1"/>
        <end position="29"/>
    </location>
</feature>
<feature type="disulfide bond" evidence="1">
    <location>
        <begin position="5"/>
        <end position="19"/>
    </location>
</feature>
<feature type="disulfide bond" evidence="1">
    <location>
        <begin position="9"/>
        <end position="21"/>
    </location>
</feature>
<feature type="disulfide bond" evidence="1">
    <location>
        <begin position="14"/>
        <end position="26"/>
    </location>
</feature>
<feature type="cross-link" description="Cyclopeptide (Gly-Asp)" evidence="5">
    <location>
        <begin position="1"/>
        <end position="29"/>
    </location>
</feature>
<feature type="unsure residue" description="L or I" evidence="3">
    <location>
        <position position="2"/>
    </location>
</feature>
<feature type="unsure residue" description="I or L" evidence="3">
    <location>
        <position position="4"/>
    </location>
</feature>
<feature type="unsure residue" description="I or L" evidence="3">
    <location>
        <position position="25"/>
    </location>
</feature>